<protein>
    <recommendedName>
        <fullName evidence="4">Proton-translocating ferredoxin:NAD(+) oxidoreductase complex subunit C</fullName>
        <ecNumber evidence="1 3">7.1.1.-</ecNumber>
    </recommendedName>
    <alternativeName>
        <fullName evidence="1 4">Rnf electron transport complex subunit C</fullName>
    </alternativeName>
</protein>
<name>RNFC_CLOLD</name>
<evidence type="ECO:0000255" key="1">
    <source>
        <dbReference type="HAMAP-Rule" id="MF_00461"/>
    </source>
</evidence>
<evidence type="ECO:0000256" key="2">
    <source>
        <dbReference type="SAM" id="MobiDB-lite"/>
    </source>
</evidence>
<evidence type="ECO:0000269" key="3">
    <source>
    </source>
</evidence>
<evidence type="ECO:0000305" key="4"/>
<evidence type="ECO:0000312" key="5">
    <source>
        <dbReference type="EMBL" id="ADK14204.1"/>
    </source>
</evidence>
<proteinExistence type="evidence at transcript level"/>
<accession>D8GR66</accession>
<organism>
    <name type="scientific">Clostridium ljungdahlii (strain ATCC 55383 / DSM 13528 / PETC)</name>
    <dbReference type="NCBI Taxonomy" id="748727"/>
    <lineage>
        <taxon>Bacteria</taxon>
        <taxon>Bacillati</taxon>
        <taxon>Bacillota</taxon>
        <taxon>Clostridia</taxon>
        <taxon>Eubacteriales</taxon>
        <taxon>Clostridiaceae</taxon>
        <taxon>Clostridium</taxon>
    </lineage>
</organism>
<keyword id="KW-0004">4Fe-4S</keyword>
<keyword id="KW-1003">Cell membrane</keyword>
<keyword id="KW-0249">Electron transport</keyword>
<keyword id="KW-0408">Iron</keyword>
<keyword id="KW-0411">Iron-sulfur</keyword>
<keyword id="KW-0472">Membrane</keyword>
<keyword id="KW-0479">Metal-binding</keyword>
<keyword id="KW-0520">NAD</keyword>
<keyword id="KW-0677">Repeat</keyword>
<keyword id="KW-1278">Translocase</keyword>
<keyword id="KW-0813">Transport</keyword>
<feature type="chain" id="PRO_0000443487" description="Proton-translocating ferredoxin:NAD(+) oxidoreductase complex subunit C">
    <location>
        <begin position="1"/>
        <end position="457"/>
    </location>
</feature>
<feature type="domain" description="4Fe-4S ferredoxin-type 1" evidence="1">
    <location>
        <begin position="353"/>
        <end position="386"/>
    </location>
</feature>
<feature type="domain" description="4Fe-4S ferredoxin-type 2" evidence="1">
    <location>
        <begin position="396"/>
        <end position="427"/>
    </location>
</feature>
<feature type="region of interest" description="Disordered" evidence="2">
    <location>
        <begin position="433"/>
        <end position="457"/>
    </location>
</feature>
<feature type="binding site" evidence="1">
    <location>
        <position position="365"/>
    </location>
    <ligand>
        <name>[4Fe-4S] cluster</name>
        <dbReference type="ChEBI" id="CHEBI:49883"/>
        <label>1</label>
    </ligand>
</feature>
<feature type="binding site" evidence="1">
    <location>
        <position position="368"/>
    </location>
    <ligand>
        <name>[4Fe-4S] cluster</name>
        <dbReference type="ChEBI" id="CHEBI:49883"/>
        <label>1</label>
    </ligand>
</feature>
<feature type="binding site" evidence="1">
    <location>
        <position position="371"/>
    </location>
    <ligand>
        <name>[4Fe-4S] cluster</name>
        <dbReference type="ChEBI" id="CHEBI:49883"/>
        <label>1</label>
    </ligand>
</feature>
<feature type="binding site" evidence="1">
    <location>
        <position position="375"/>
    </location>
    <ligand>
        <name>[4Fe-4S] cluster</name>
        <dbReference type="ChEBI" id="CHEBI:49883"/>
        <label>2</label>
    </ligand>
</feature>
<feature type="binding site" evidence="1">
    <location>
        <position position="405"/>
    </location>
    <ligand>
        <name>[4Fe-4S] cluster</name>
        <dbReference type="ChEBI" id="CHEBI:49883"/>
        <label>2</label>
    </ligand>
</feature>
<feature type="binding site" evidence="1">
    <location>
        <position position="408"/>
    </location>
    <ligand>
        <name>[4Fe-4S] cluster</name>
        <dbReference type="ChEBI" id="CHEBI:49883"/>
        <label>2</label>
    </ligand>
</feature>
<feature type="binding site" evidence="1">
    <location>
        <position position="411"/>
    </location>
    <ligand>
        <name>[4Fe-4S] cluster</name>
        <dbReference type="ChEBI" id="CHEBI:49883"/>
        <label>2</label>
    </ligand>
</feature>
<feature type="binding site" evidence="1">
    <location>
        <position position="415"/>
    </location>
    <ligand>
        <name>[4Fe-4S] cluster</name>
        <dbReference type="ChEBI" id="CHEBI:49883"/>
        <label>1</label>
    </ligand>
</feature>
<sequence>MLKSFRGGVHPDDSKKYTANKPIEIAPIPDKVFIPVRQHIGAPTSPVVQKGDEVKKGQLIAKSDAFVSANIYASTSGKVVDIGDYPHPGFGKCQAIVIEKDGKDEWVEGIPTSRNWKELSVKEMLGIIREAGIVGMGGATFPVHVKLAPPPDKKVDVFILNGAECEPYLTADYRSMLENSDKVVAGVQIIMKILNVEKAFVGIEDNKPKAIEAMKKAFEGTKVQVVGLPTKYPQGAEKMLINVLTGREVPSGGLPADVGAVVQNVGTCIAISDAVERGIPLIQRVTTISGGAIKEPKNILVRIGTTFKDAIDFCGGFKEEPVKIISGGPMMGFAQSNLDIPIMKGSSGILGLTKNDVNDGKESSCIRCGRCLKACPMHLNPSMLSILGQKDLYQEAKEEYNLLDCVECGSCVYTCPAKRKIVQYIRYLKSENRAAGEREKAKAAKAKEKKEKEEVLK</sequence>
<reference key="1">
    <citation type="journal article" date="2010" name="Proc. Natl. Acad. Sci. U.S.A.">
        <title>Clostridium ljungdahlii represents a microbial production platform based on syngas.</title>
        <authorList>
            <person name="Kopke M."/>
            <person name="Held C."/>
            <person name="Hujer S."/>
            <person name="Liesegang H."/>
            <person name="Wiezer A."/>
            <person name="Wollherr A."/>
            <person name="Ehrenreich A."/>
            <person name="Liebl W."/>
            <person name="Gottschalk G."/>
            <person name="Durre P."/>
        </authorList>
    </citation>
    <scope>NUCLEOTIDE SEQUENCE [LARGE SCALE GENOMIC DNA]</scope>
    <source>
        <strain>ATCC 55383 / DSM 13528 / PETC</strain>
    </source>
</reference>
<reference key="2">
    <citation type="journal article" date="2012" name="MBio">
        <title>The Rnf complex of Clostridium ljungdahlii is a proton-translocating ferredoxin:NAD+ oxidoreductase essential for autotrophic growth.</title>
        <authorList>
            <person name="Tremblay P.L."/>
            <person name="Zhang T."/>
            <person name="Dar S.A."/>
            <person name="Leang C."/>
            <person name="Lovley D.R."/>
        </authorList>
    </citation>
    <scope>FUNCTION</scope>
    <scope>INDUCTION</scope>
    <source>
        <strain>ATCC 55383 / DSM 13528 / PETC</strain>
    </source>
</reference>
<gene>
    <name evidence="1 5" type="primary">rnfC</name>
    <name evidence="5" type="ordered locus">CLJU_c11360</name>
</gene>
<comment type="function">
    <text evidence="3">Part of a membrane-bound complex that couples electron transfer with translocation of ions across the membrane. Couples electron transfer from reduced ferredoxin to NAD(+) with translocation of H(+) out of the cell. Essential for energy conservation during autotrophic growth. Contributes to ATP synthesis during heterotrophic growth.</text>
</comment>
<comment type="cofactor">
    <cofactor evidence="1">
        <name>[4Fe-4S] cluster</name>
        <dbReference type="ChEBI" id="CHEBI:49883"/>
    </cofactor>
    <text evidence="1">Binds 2 [4Fe-4S] clusters per subunit.</text>
</comment>
<comment type="subunit">
    <text evidence="1">The complex is composed of six subunits: RnfA, RnfB, RnfC, RnfD, RnfE and RnfG.</text>
</comment>
<comment type="subcellular location">
    <subcellularLocation>
        <location evidence="1">Cell membrane</location>
        <topology evidence="1">Peripheral membrane protein</topology>
    </subcellularLocation>
</comment>
<comment type="induction">
    <text evidence="3">Up-regulated when grown on H(2)-CO(2).</text>
</comment>
<comment type="similarity">
    <text evidence="1">Belongs to the 4Fe4S bacterial-type ferredoxin family. RnfC subfamily.</text>
</comment>
<dbReference type="EC" id="7.1.1.-" evidence="1 3"/>
<dbReference type="EMBL" id="CP001666">
    <property type="protein sequence ID" value="ADK14204.1"/>
    <property type="molecule type" value="Genomic_DNA"/>
</dbReference>
<dbReference type="SMR" id="D8GR66"/>
<dbReference type="STRING" id="748727.CLJU_c11360"/>
<dbReference type="KEGG" id="clj:CLJU_c11360"/>
<dbReference type="PATRIC" id="fig|748727.19.peg.4236"/>
<dbReference type="eggNOG" id="COG4656">
    <property type="taxonomic scope" value="Bacteria"/>
</dbReference>
<dbReference type="HOGENOM" id="CLU_010808_6_0_9"/>
<dbReference type="OrthoDB" id="9767754at2"/>
<dbReference type="BRENDA" id="7.1.1.11">
    <property type="organism ID" value="12866"/>
</dbReference>
<dbReference type="Proteomes" id="UP000001656">
    <property type="component" value="Chromosome"/>
</dbReference>
<dbReference type="GO" id="GO:0005886">
    <property type="term" value="C:plasma membrane"/>
    <property type="evidence" value="ECO:0007669"/>
    <property type="project" value="UniProtKB-SubCell"/>
</dbReference>
<dbReference type="GO" id="GO:0051539">
    <property type="term" value="F:4 iron, 4 sulfur cluster binding"/>
    <property type="evidence" value="ECO:0007669"/>
    <property type="project" value="UniProtKB-KW"/>
</dbReference>
<dbReference type="GO" id="GO:0009055">
    <property type="term" value="F:electron transfer activity"/>
    <property type="evidence" value="ECO:0007669"/>
    <property type="project" value="InterPro"/>
</dbReference>
<dbReference type="GO" id="GO:0046872">
    <property type="term" value="F:metal ion binding"/>
    <property type="evidence" value="ECO:0007669"/>
    <property type="project" value="UniProtKB-KW"/>
</dbReference>
<dbReference type="GO" id="GO:0022900">
    <property type="term" value="P:electron transport chain"/>
    <property type="evidence" value="ECO:0007669"/>
    <property type="project" value="UniProtKB-UniRule"/>
</dbReference>
<dbReference type="Gene3D" id="3.10.20.600">
    <property type="match status" value="1"/>
</dbReference>
<dbReference type="Gene3D" id="3.30.70.20">
    <property type="match status" value="1"/>
</dbReference>
<dbReference type="Gene3D" id="3.40.50.11540">
    <property type="entry name" value="NADH-ubiquinone oxidoreductase 51kDa subunit"/>
    <property type="match status" value="1"/>
</dbReference>
<dbReference type="HAMAP" id="MF_00461">
    <property type="entry name" value="RsxC_RnfC"/>
    <property type="match status" value="1"/>
</dbReference>
<dbReference type="InterPro" id="IPR017896">
    <property type="entry name" value="4Fe4S_Fe-S-bd"/>
</dbReference>
<dbReference type="InterPro" id="IPR017900">
    <property type="entry name" value="4Fe4S_Fe_S_CS"/>
</dbReference>
<dbReference type="InterPro" id="IPR010208">
    <property type="entry name" value="Ion_transpt_RnfC/RsxC"/>
</dbReference>
<dbReference type="InterPro" id="IPR011538">
    <property type="entry name" value="Nuo51_FMN-bd"/>
</dbReference>
<dbReference type="InterPro" id="IPR037225">
    <property type="entry name" value="Nuo51_FMN-bd_sf"/>
</dbReference>
<dbReference type="InterPro" id="IPR026902">
    <property type="entry name" value="RnfC_N"/>
</dbReference>
<dbReference type="InterPro" id="IPR019554">
    <property type="entry name" value="Soluble_ligand-bd"/>
</dbReference>
<dbReference type="NCBIfam" id="NF003454">
    <property type="entry name" value="PRK05035.1"/>
    <property type="match status" value="1"/>
</dbReference>
<dbReference type="NCBIfam" id="TIGR01945">
    <property type="entry name" value="rnfC"/>
    <property type="match status" value="1"/>
</dbReference>
<dbReference type="PANTHER" id="PTHR43034">
    <property type="entry name" value="ION-TRANSLOCATING OXIDOREDUCTASE COMPLEX SUBUNIT C"/>
    <property type="match status" value="1"/>
</dbReference>
<dbReference type="PANTHER" id="PTHR43034:SF2">
    <property type="entry name" value="ION-TRANSLOCATING OXIDOREDUCTASE COMPLEX SUBUNIT C"/>
    <property type="match status" value="1"/>
</dbReference>
<dbReference type="Pfam" id="PF01512">
    <property type="entry name" value="Complex1_51K"/>
    <property type="match status" value="1"/>
</dbReference>
<dbReference type="Pfam" id="PF13237">
    <property type="entry name" value="Fer4_10"/>
    <property type="match status" value="1"/>
</dbReference>
<dbReference type="Pfam" id="PF13375">
    <property type="entry name" value="RnfC_N"/>
    <property type="match status" value="1"/>
</dbReference>
<dbReference type="Pfam" id="PF10531">
    <property type="entry name" value="SLBB"/>
    <property type="match status" value="1"/>
</dbReference>
<dbReference type="SUPFAM" id="SSF46548">
    <property type="entry name" value="alpha-helical ferredoxin"/>
    <property type="match status" value="1"/>
</dbReference>
<dbReference type="SUPFAM" id="SSF142019">
    <property type="entry name" value="Nqo1 FMN-binding domain-like"/>
    <property type="match status" value="1"/>
</dbReference>
<dbReference type="PROSITE" id="PS00198">
    <property type="entry name" value="4FE4S_FER_1"/>
    <property type="match status" value="2"/>
</dbReference>
<dbReference type="PROSITE" id="PS51379">
    <property type="entry name" value="4FE4S_FER_2"/>
    <property type="match status" value="2"/>
</dbReference>